<protein>
    <recommendedName>
        <fullName evidence="3">Cyclic-di-GMP receptor FimW</fullName>
    </recommendedName>
</protein>
<feature type="chain" id="PRO_0000446520" description="Cyclic-di-GMP receptor FimW">
    <location>
        <begin position="1"/>
        <end position="607"/>
    </location>
</feature>
<feature type="region of interest" description="PilZ-like domain" evidence="4">
    <location>
        <begin position="323"/>
        <end position="492"/>
    </location>
</feature>
<feature type="region of interest" description="Disordered" evidence="1">
    <location>
        <begin position="568"/>
        <end position="607"/>
    </location>
</feature>
<feature type="short sequence motif" description="RXXXR motif" evidence="4">
    <location>
        <begin position="324"/>
        <end position="328"/>
    </location>
</feature>
<feature type="short sequence motif" description="D/NXSXXG motif" evidence="4">
    <location>
        <begin position="435"/>
        <end position="440"/>
    </location>
</feature>
<feature type="compositionally biased region" description="Polar residues" evidence="1">
    <location>
        <begin position="568"/>
        <end position="582"/>
    </location>
</feature>
<feature type="mutagenesis site" description="5.6-fold decrease in c-di-GMP affinity." evidence="2">
    <original>R</original>
    <variation>A</variation>
    <location>
        <position position="324"/>
    </location>
</feature>
<feature type="mutagenesis site" description="Cannot bind c-di-GMP. Fails to localize to the poles and to attach to the surface." evidence="2">
    <original>R</original>
    <variation>A</variation>
    <location>
        <position position="328"/>
    </location>
</feature>
<feature type="mutagenesis site" description="9.3-fold decrease in c-di-GMP affinity." evidence="2">
    <original>S</original>
    <variation>A</variation>
    <location>
        <position position="437"/>
    </location>
</feature>
<feature type="mutagenesis site" description="Cannot bind c-di-GMP." evidence="2">
    <original>G</original>
    <variation>A</variation>
    <location>
        <position position="440"/>
    </location>
</feature>
<proteinExistence type="evidence at protein level"/>
<accession>Q9HUK7</accession>
<sequence>MENQSPHLSLRVPTPTQQNLSFCDATPKDIKYWLAHLPKANLGETARQLYQGLIELNQLVLPVEARLQLLELFRPEVHFVCAHLERHFLNQAIVLDERPRKIANLCQALQNHLAIGYKLIVVQEAPRNSRDRAQLFAVGIQRAIRSLCGPLIRASQLYCPVPEGLWLELHQLYQLASQRGVHRLAVRDELAKHTPGLSVEQAYLIPLLLGCARCNQMRQNNIARLAEVLEPWSQLLSIQSATLPGSLFIAVPQIDGPPRYRSLYPETQLASALGIDTQPLVELIREYLLQPEAERAKARLPLIEGVTLDLLQHLSSAWGDIAERTFQRTQGQGQLTLCIGMSALHYFLAGRRPFNEVLQIQEAPEAPRFKADVQDAWAGAFDAQKVTDWQPGMPLEEIEYRPHQSPRSVQPGHPQAHAQADATEDYPTYALPIVNHSPGGYCLSWPKEVPAQLQAGELVGLQDLPGQAWSIAVVRWIRQVRNGGTQMGIEMIAPAAQPCGLQLLRKTEQSSHYLRALLLPAIAAISRPATVITPRLPFQEGSRVQINLHGEERRAVLNRRQASTGSFSQFEYRSAEPVNTPSDKPVTAPVARPPAGEEDFDSLWKSL</sequence>
<gene>
    <name evidence="3" type="primary">fimW</name>
    <name evidence="5" type="ordered locus">PA4958</name>
</gene>
<reference key="1">
    <citation type="journal article" date="2000" name="Nature">
        <title>Complete genome sequence of Pseudomonas aeruginosa PAO1, an opportunistic pathogen.</title>
        <authorList>
            <person name="Stover C.K."/>
            <person name="Pham X.-Q.T."/>
            <person name="Erwin A.L."/>
            <person name="Mizoguchi S.D."/>
            <person name="Warrener P."/>
            <person name="Hickey M.J."/>
            <person name="Brinkman F.S.L."/>
            <person name="Hufnagle W.O."/>
            <person name="Kowalik D.J."/>
            <person name="Lagrou M."/>
            <person name="Garber R.L."/>
            <person name="Goltry L."/>
            <person name="Tolentino E."/>
            <person name="Westbrock-Wadman S."/>
            <person name="Yuan Y."/>
            <person name="Brody L.L."/>
            <person name="Coulter S.N."/>
            <person name="Folger K.R."/>
            <person name="Kas A."/>
            <person name="Larbig K."/>
            <person name="Lim R.M."/>
            <person name="Smith K.A."/>
            <person name="Spencer D.H."/>
            <person name="Wong G.K.-S."/>
            <person name="Wu Z."/>
            <person name="Paulsen I.T."/>
            <person name="Reizer J."/>
            <person name="Saier M.H. Jr."/>
            <person name="Hancock R.E.W."/>
            <person name="Lory S."/>
            <person name="Olson M.V."/>
        </authorList>
    </citation>
    <scope>NUCLEOTIDE SEQUENCE [LARGE SCALE GENOMIC DNA]</scope>
    <source>
        <strain>ATCC 15692 / DSM 22644 / CIP 104116 / JCM 14847 / LMG 12228 / 1C / PRS 101 / PAO1</strain>
    </source>
</reference>
<reference key="2">
    <citation type="journal article" date="2019" name="Cell Host Microbe">
        <title>A surface-induced asymmetric program promotes tissue colonization by Pseudomonas aeruginosa.</title>
        <authorList>
            <person name="Laventie B.J."/>
            <person name="Sangermani M."/>
            <person name="Estermann F."/>
            <person name="Manfredi P."/>
            <person name="Planes R."/>
            <person name="Hug I."/>
            <person name="Jaeger T."/>
            <person name="Meunier E."/>
            <person name="Broz P."/>
            <person name="Jenal U."/>
        </authorList>
    </citation>
    <scope>FUNCTION</scope>
    <scope>SUBUNIT</scope>
    <scope>SUBCELLULAR LOCATION</scope>
    <scope>DOMAIN</scope>
    <scope>DISRUPTION PHENOTYPE</scope>
    <scope>MUTAGENESIS OF ARG-324; ARG-328; SER-437 AND GLY-440</scope>
    <source>
        <strain>ATCC 15692 / DSM 22644 / CIP 104116 / JCM 14847 / LMG 12228 / 1C / PRS 101 / PAO1</strain>
    </source>
</reference>
<organism>
    <name type="scientific">Pseudomonas aeruginosa (strain ATCC 15692 / DSM 22644 / CIP 104116 / JCM 14847 / LMG 12228 / 1C / PRS 101 / PAO1)</name>
    <dbReference type="NCBI Taxonomy" id="208964"/>
    <lineage>
        <taxon>Bacteria</taxon>
        <taxon>Pseudomonadati</taxon>
        <taxon>Pseudomonadota</taxon>
        <taxon>Gammaproteobacteria</taxon>
        <taxon>Pseudomonadales</taxon>
        <taxon>Pseudomonadaceae</taxon>
        <taxon>Pseudomonas</taxon>
    </lineage>
</organism>
<name>FIMW_PSEAE</name>
<keyword id="KW-0973">c-di-GMP</keyword>
<keyword id="KW-0963">Cytoplasm</keyword>
<keyword id="KW-0547">Nucleotide-binding</keyword>
<keyword id="KW-1185">Reference proteome</keyword>
<keyword id="KW-0843">Virulence</keyword>
<comment type="function">
    <text evidence="2">High-affinity cyclic-di-GMP binding protein that regulates type IV pili (T4P) elongation. Required for T4P-mediated surface attachment and walking motility during the early phases of surface colonization. Not required for twitching motility. Does not bind related nucleotides such as GMP, GDP, GTP or ATP.</text>
</comment>
<comment type="subunit">
    <text evidence="2">Monomer in the absence of c-di-GMP. Forms dimers in the presence of c-di-GMP.</text>
</comment>
<comment type="subcellular location">
    <subcellularLocation>
        <location>Cytoplasm</location>
    </subcellularLocation>
    <text evidence="2">Rapidly localizes to the cell poles upon surface contact in a c-di-GMP-dependent manner. Dynamically transitions between the cytoplasm and the cell poles, as a function of c-di-GMP binding.</text>
</comment>
<comment type="domain">
    <text evidence="2">Contains a PilZ-like fold that binds two molecules of c-di-GMP via two well-conserved c-di-GMP-binding motifs, RXXXR and D/NXSXXG.</text>
</comment>
<comment type="disruption phenotype">
    <text evidence="2">Mutant has reduced surface piliation and is unable to increase piliation upon surface exposure. It shows defects in initial surface attachment and in early biofilm formation, but late biofilm formation is not affected. Mutant loses walking motility but twitching motility is barely affected.</text>
</comment>
<comment type="sequence caution" evidence="4">
    <conflict type="erroneous initiation">
        <sequence resource="EMBL-CDS" id="AAG08343"/>
    </conflict>
    <text>Truncated N-terminus.</text>
</comment>
<dbReference type="EMBL" id="AE004091">
    <property type="protein sequence ID" value="AAG08343.1"/>
    <property type="status" value="ALT_INIT"/>
    <property type="molecule type" value="Genomic_DNA"/>
</dbReference>
<dbReference type="PIR" id="D83027">
    <property type="entry name" value="D83027"/>
</dbReference>
<dbReference type="RefSeq" id="NP_253645.2">
    <property type="nucleotide sequence ID" value="NC_002516.2"/>
</dbReference>
<dbReference type="RefSeq" id="WP_003113922.1">
    <property type="nucleotide sequence ID" value="NZ_QZGE01000002.1"/>
</dbReference>
<dbReference type="SMR" id="Q9HUK7"/>
<dbReference type="STRING" id="208964.PA4958"/>
<dbReference type="PaxDb" id="208964-PA4958"/>
<dbReference type="GeneID" id="878415"/>
<dbReference type="KEGG" id="pae:PA4958"/>
<dbReference type="PATRIC" id="fig|208964.12.peg.5192"/>
<dbReference type="PseudoCAP" id="PA4958"/>
<dbReference type="HOGENOM" id="CLU_031627_1_0_6"/>
<dbReference type="InParanoid" id="Q9HUK7"/>
<dbReference type="OrthoDB" id="5724405at2"/>
<dbReference type="BioCyc" id="PAER208964:G1FZ6-5074-MONOMER"/>
<dbReference type="Proteomes" id="UP000002438">
    <property type="component" value="Chromosome"/>
</dbReference>
<dbReference type="GO" id="GO:0005737">
    <property type="term" value="C:cytoplasm"/>
    <property type="evidence" value="ECO:0007669"/>
    <property type="project" value="UniProtKB-SubCell"/>
</dbReference>
<dbReference type="GO" id="GO:0000166">
    <property type="term" value="F:nucleotide binding"/>
    <property type="evidence" value="ECO:0007669"/>
    <property type="project" value="UniProtKB-KW"/>
</dbReference>
<evidence type="ECO:0000256" key="1">
    <source>
        <dbReference type="SAM" id="MobiDB-lite"/>
    </source>
</evidence>
<evidence type="ECO:0000269" key="2">
    <source>
    </source>
</evidence>
<evidence type="ECO:0000303" key="3">
    <source>
    </source>
</evidence>
<evidence type="ECO:0000305" key="4">
    <source>
    </source>
</evidence>
<evidence type="ECO:0000312" key="5">
    <source>
        <dbReference type="EMBL" id="AAG08343.1"/>
    </source>
</evidence>